<organism>
    <name type="scientific">Tetrahymena thermophila (strain SB210)</name>
    <dbReference type="NCBI Taxonomy" id="312017"/>
    <lineage>
        <taxon>Eukaryota</taxon>
        <taxon>Sar</taxon>
        <taxon>Alveolata</taxon>
        <taxon>Ciliophora</taxon>
        <taxon>Intramacronucleata</taxon>
        <taxon>Oligohymenophorea</taxon>
        <taxon>Hymenostomatida</taxon>
        <taxon>Tetrahymenina</taxon>
        <taxon>Tetrahymenidae</taxon>
        <taxon>Tetrahymena</taxon>
    </lineage>
</organism>
<protein>
    <recommendedName>
        <fullName evidence="1">Large ribosomal subunit protein uL14</fullName>
    </recommendedName>
    <alternativeName>
        <fullName>60S ribosomal protein L23</fullName>
    </alternativeName>
</protein>
<evidence type="ECO:0000305" key="1"/>
<accession>P0DJ53</accession>
<comment type="similarity">
    <text evidence="1">Belongs to the universal ribosomal protein uL14 family.</text>
</comment>
<gene>
    <name type="primary">RPL23</name>
    <name type="ORF">TTHERM_00227270</name>
</gene>
<dbReference type="EMBL" id="GG662740">
    <property type="protein sequence ID" value="EAR93002.2"/>
    <property type="molecule type" value="Genomic_DNA"/>
</dbReference>
<dbReference type="RefSeq" id="XP_001013247.2">
    <property type="nucleotide sequence ID" value="XM_001013247.3"/>
</dbReference>
<dbReference type="PDB" id="4V8P">
    <property type="method" value="X-ray"/>
    <property type="resolution" value="3.52 A"/>
    <property type="chains" value="BJ/CJ/EJ/GJ=1-141"/>
</dbReference>
<dbReference type="PDBsum" id="4V8P"/>
<dbReference type="SMR" id="P0DJ53"/>
<dbReference type="FunCoup" id="P0DJ53">
    <property type="interactions" value="515"/>
</dbReference>
<dbReference type="IntAct" id="P0DJ53">
    <property type="interactions" value="1"/>
</dbReference>
<dbReference type="STRING" id="312017.P0DJ53"/>
<dbReference type="EnsemblProtists" id="EAR93002">
    <property type="protein sequence ID" value="EAR93002"/>
    <property type="gene ID" value="TTHERM_00297140"/>
</dbReference>
<dbReference type="KEGG" id="tet:TTHERM_00297140"/>
<dbReference type="eggNOG" id="KOG0901">
    <property type="taxonomic scope" value="Eukaryota"/>
</dbReference>
<dbReference type="HOGENOM" id="CLU_095071_3_0_1"/>
<dbReference type="InParanoid" id="P0DJ53"/>
<dbReference type="OMA" id="MIQMQTR"/>
<dbReference type="OrthoDB" id="294753at2759"/>
<dbReference type="Proteomes" id="UP000009168">
    <property type="component" value="Unassembled WGS sequence"/>
</dbReference>
<dbReference type="GO" id="GO:0022625">
    <property type="term" value="C:cytosolic large ribosomal subunit"/>
    <property type="evidence" value="ECO:0007669"/>
    <property type="project" value="TreeGrafter"/>
</dbReference>
<dbReference type="GO" id="GO:0070180">
    <property type="term" value="F:large ribosomal subunit rRNA binding"/>
    <property type="evidence" value="ECO:0007669"/>
    <property type="project" value="TreeGrafter"/>
</dbReference>
<dbReference type="GO" id="GO:0003735">
    <property type="term" value="F:structural constituent of ribosome"/>
    <property type="evidence" value="ECO:0007669"/>
    <property type="project" value="InterPro"/>
</dbReference>
<dbReference type="GO" id="GO:0006412">
    <property type="term" value="P:translation"/>
    <property type="evidence" value="ECO:0007669"/>
    <property type="project" value="InterPro"/>
</dbReference>
<dbReference type="CDD" id="cd00337">
    <property type="entry name" value="Ribosomal_uL14"/>
    <property type="match status" value="1"/>
</dbReference>
<dbReference type="FunFam" id="2.40.150.20:FF:000003">
    <property type="entry name" value="60S ribosomal protein L23"/>
    <property type="match status" value="1"/>
</dbReference>
<dbReference type="Gene3D" id="2.40.150.20">
    <property type="entry name" value="Ribosomal protein L14"/>
    <property type="match status" value="1"/>
</dbReference>
<dbReference type="HAMAP" id="MF_01367">
    <property type="entry name" value="Ribosomal_uL14"/>
    <property type="match status" value="1"/>
</dbReference>
<dbReference type="InterPro" id="IPR000218">
    <property type="entry name" value="Ribosomal_uL14"/>
</dbReference>
<dbReference type="InterPro" id="IPR019972">
    <property type="entry name" value="Ribosomal_uL14_CS"/>
</dbReference>
<dbReference type="InterPro" id="IPR036853">
    <property type="entry name" value="Ribosomal_uL14_sf"/>
</dbReference>
<dbReference type="PANTHER" id="PTHR11761">
    <property type="entry name" value="50S/60S RIBOSOMAL PROTEIN L14/L23"/>
    <property type="match status" value="1"/>
</dbReference>
<dbReference type="PANTHER" id="PTHR11761:SF8">
    <property type="entry name" value="LARGE RIBOSOMAL SUBUNIT PROTEIN UL14"/>
    <property type="match status" value="1"/>
</dbReference>
<dbReference type="Pfam" id="PF00238">
    <property type="entry name" value="Ribosomal_L14"/>
    <property type="match status" value="1"/>
</dbReference>
<dbReference type="SMART" id="SM01374">
    <property type="entry name" value="Ribosomal_L14"/>
    <property type="match status" value="1"/>
</dbReference>
<dbReference type="SUPFAM" id="SSF50193">
    <property type="entry name" value="Ribosomal protein L14"/>
    <property type="match status" value="1"/>
</dbReference>
<dbReference type="PROSITE" id="PS00049">
    <property type="entry name" value="RIBOSOMAL_L14"/>
    <property type="match status" value="1"/>
</dbReference>
<proteinExistence type="evidence at protein level"/>
<sequence>MAAARGRGGQVGTKAKVSLGLPVGAVMNCADNSGAKNLYTIACFGIKGHLSKLPSASIGDMILCSVKKGSPKLRKKVLQAIVIRQRRPWRRRDGVFIYFEDNAGVIANPKGEMKGSQITGPVAKECADIWPKVASNAGSVV</sequence>
<reference key="1">
    <citation type="journal article" date="2006" name="PLoS Biol.">
        <title>Macronuclear genome sequence of the ciliate Tetrahymena thermophila, a model eukaryote.</title>
        <authorList>
            <person name="Eisen J.A."/>
            <person name="Coyne R.S."/>
            <person name="Wu M."/>
            <person name="Wu D."/>
            <person name="Thiagarajan M."/>
            <person name="Wortman J.R."/>
            <person name="Badger J.H."/>
            <person name="Ren Q."/>
            <person name="Amedeo P."/>
            <person name="Jones K.M."/>
            <person name="Tallon L.J."/>
            <person name="Delcher A.L."/>
            <person name="Salzberg S.L."/>
            <person name="Silva J.C."/>
            <person name="Haas B.J."/>
            <person name="Majoros W.H."/>
            <person name="Farzad M."/>
            <person name="Carlton J.M."/>
            <person name="Smith R.K. Jr."/>
            <person name="Garg J."/>
            <person name="Pearlman R.E."/>
            <person name="Karrer K.M."/>
            <person name="Sun L."/>
            <person name="Manning G."/>
            <person name="Elde N.C."/>
            <person name="Turkewitz A.P."/>
            <person name="Asai D.J."/>
            <person name="Wilkes D.E."/>
            <person name="Wang Y."/>
            <person name="Cai H."/>
            <person name="Collins K."/>
            <person name="Stewart B.A."/>
            <person name="Lee S.R."/>
            <person name="Wilamowska K."/>
            <person name="Weinberg Z."/>
            <person name="Ruzzo W.L."/>
            <person name="Wloga D."/>
            <person name="Gaertig J."/>
            <person name="Frankel J."/>
            <person name="Tsao C.-C."/>
            <person name="Gorovsky M.A."/>
            <person name="Keeling P.J."/>
            <person name="Waller R.F."/>
            <person name="Patron N.J."/>
            <person name="Cherry J.M."/>
            <person name="Stover N.A."/>
            <person name="Krieger C.J."/>
            <person name="del Toro C."/>
            <person name="Ryder H.F."/>
            <person name="Williamson S.C."/>
            <person name="Barbeau R.A."/>
            <person name="Hamilton E.P."/>
            <person name="Orias E."/>
        </authorList>
    </citation>
    <scope>NUCLEOTIDE SEQUENCE [LARGE SCALE GENOMIC DNA]</scope>
    <source>
        <strain>SB210</strain>
    </source>
</reference>
<reference key="2">
    <citation type="journal article" date="2011" name="Science">
        <title>Crystal structure of the eukaryotic 60S ribosomal subunit in complex with initiation factor 6.</title>
        <authorList>
            <person name="Klinge S."/>
            <person name="Voigts-Hoffmann F."/>
            <person name="Leibundgut M."/>
            <person name="Arpagaus S."/>
            <person name="Ban N."/>
        </authorList>
    </citation>
    <scope>X-RAY CRYSTALLOGRAPHY (3.52 ANGSTROMS) OF 60S RIBOSOME</scope>
</reference>
<feature type="chain" id="PRO_0000413507" description="Large ribosomal subunit protein uL14">
    <location>
        <begin position="1"/>
        <end position="141"/>
    </location>
</feature>
<keyword id="KW-0002">3D-structure</keyword>
<keyword id="KW-1185">Reference proteome</keyword>
<keyword id="KW-0687">Ribonucleoprotein</keyword>
<keyword id="KW-0689">Ribosomal protein</keyword>
<name>RL23_TETTS</name>